<protein>
    <recommendedName>
        <fullName evidence="1">ATP-dependent Clp protease ATP-binding subunit ClpX</fullName>
    </recommendedName>
</protein>
<accession>Q2FG62</accession>
<evidence type="ECO:0000255" key="1">
    <source>
        <dbReference type="HAMAP-Rule" id="MF_00175"/>
    </source>
</evidence>
<evidence type="ECO:0000255" key="2">
    <source>
        <dbReference type="PROSITE-ProRule" id="PRU01250"/>
    </source>
</evidence>
<sequence length="420" mass="46297">MFKFNEDEENLKCSFCGKDQDQVKKLVAGSGVYICNECIELCSEIVEEELAQNTSEAMTELPTPKEIMDHLNEYVIGQEKAKKSLAVAVYNHYKRIQQLGPKEDDVELQKSNIALIGPTGSGKTLLAQTLAKTLNVPFAIADATSLTEAGYVGDDVENILLRLIQAADFDIDKAEKGIIYVDEIDKIARKSENTSITRDVSGEGVQQALLKILEGTTASVPPQGGRKHPNQEMIQIDTTNILFILGGAFDGIEEVIKRRLGEKVIGFSSNEADKYDEQALLAQIRPEDLQAYGLIPEFIGRVPIVANLETLDVTALKNILTQPKNALVKQYTKMLELDDVDLEFTEEALSAISEKAIERKTGARGLRSIIEESLIDIMFDVPSNENVTKVVITAQTINEETEPELYDAEGNLINNSKTSA</sequence>
<keyword id="KW-0067">ATP-binding</keyword>
<keyword id="KW-0143">Chaperone</keyword>
<keyword id="KW-0479">Metal-binding</keyword>
<keyword id="KW-0547">Nucleotide-binding</keyword>
<keyword id="KW-0862">Zinc</keyword>
<dbReference type="EMBL" id="CP000255">
    <property type="protein sequence ID" value="ABD22438.1"/>
    <property type="molecule type" value="Genomic_DNA"/>
</dbReference>
<dbReference type="RefSeq" id="WP_000472302.1">
    <property type="nucleotide sequence ID" value="NZ_CP027476.1"/>
</dbReference>
<dbReference type="SMR" id="Q2FG62"/>
<dbReference type="KEGG" id="saa:SAUSA300_1621"/>
<dbReference type="HOGENOM" id="CLU_014218_8_2_9"/>
<dbReference type="OMA" id="LDTMFDL"/>
<dbReference type="Proteomes" id="UP000001939">
    <property type="component" value="Chromosome"/>
</dbReference>
<dbReference type="GO" id="GO:0009376">
    <property type="term" value="C:HslUV protease complex"/>
    <property type="evidence" value="ECO:0007669"/>
    <property type="project" value="TreeGrafter"/>
</dbReference>
<dbReference type="GO" id="GO:0005524">
    <property type="term" value="F:ATP binding"/>
    <property type="evidence" value="ECO:0007669"/>
    <property type="project" value="UniProtKB-UniRule"/>
</dbReference>
<dbReference type="GO" id="GO:0016887">
    <property type="term" value="F:ATP hydrolysis activity"/>
    <property type="evidence" value="ECO:0007669"/>
    <property type="project" value="InterPro"/>
</dbReference>
<dbReference type="GO" id="GO:0140662">
    <property type="term" value="F:ATP-dependent protein folding chaperone"/>
    <property type="evidence" value="ECO:0007669"/>
    <property type="project" value="InterPro"/>
</dbReference>
<dbReference type="GO" id="GO:0046983">
    <property type="term" value="F:protein dimerization activity"/>
    <property type="evidence" value="ECO:0007669"/>
    <property type="project" value="InterPro"/>
</dbReference>
<dbReference type="GO" id="GO:0051082">
    <property type="term" value="F:unfolded protein binding"/>
    <property type="evidence" value="ECO:0007669"/>
    <property type="project" value="UniProtKB-UniRule"/>
</dbReference>
<dbReference type="GO" id="GO:0008270">
    <property type="term" value="F:zinc ion binding"/>
    <property type="evidence" value="ECO:0007669"/>
    <property type="project" value="InterPro"/>
</dbReference>
<dbReference type="GO" id="GO:0051301">
    <property type="term" value="P:cell division"/>
    <property type="evidence" value="ECO:0007669"/>
    <property type="project" value="TreeGrafter"/>
</dbReference>
<dbReference type="GO" id="GO:0051603">
    <property type="term" value="P:proteolysis involved in protein catabolic process"/>
    <property type="evidence" value="ECO:0007669"/>
    <property type="project" value="TreeGrafter"/>
</dbReference>
<dbReference type="CDD" id="cd19497">
    <property type="entry name" value="RecA-like_ClpX"/>
    <property type="match status" value="1"/>
</dbReference>
<dbReference type="FunFam" id="1.10.8.60:FF:000002">
    <property type="entry name" value="ATP-dependent Clp protease ATP-binding subunit ClpX"/>
    <property type="match status" value="1"/>
</dbReference>
<dbReference type="FunFam" id="3.40.50.300:FF:000005">
    <property type="entry name" value="ATP-dependent Clp protease ATP-binding subunit ClpX"/>
    <property type="match status" value="1"/>
</dbReference>
<dbReference type="Gene3D" id="1.10.8.60">
    <property type="match status" value="1"/>
</dbReference>
<dbReference type="Gene3D" id="6.20.220.10">
    <property type="entry name" value="ClpX chaperone, C4-type zinc finger domain"/>
    <property type="match status" value="1"/>
</dbReference>
<dbReference type="Gene3D" id="3.40.50.300">
    <property type="entry name" value="P-loop containing nucleotide triphosphate hydrolases"/>
    <property type="match status" value="1"/>
</dbReference>
<dbReference type="HAMAP" id="MF_00175">
    <property type="entry name" value="ClpX"/>
    <property type="match status" value="1"/>
</dbReference>
<dbReference type="InterPro" id="IPR003593">
    <property type="entry name" value="AAA+_ATPase"/>
</dbReference>
<dbReference type="InterPro" id="IPR050052">
    <property type="entry name" value="ATP-dep_Clp_protease_ClpX"/>
</dbReference>
<dbReference type="InterPro" id="IPR003959">
    <property type="entry name" value="ATPase_AAA_core"/>
</dbReference>
<dbReference type="InterPro" id="IPR019489">
    <property type="entry name" value="Clp_ATPase_C"/>
</dbReference>
<dbReference type="InterPro" id="IPR004487">
    <property type="entry name" value="Clp_protease_ATP-bd_su_ClpX"/>
</dbReference>
<dbReference type="InterPro" id="IPR046425">
    <property type="entry name" value="ClpX_bact"/>
</dbReference>
<dbReference type="InterPro" id="IPR027417">
    <property type="entry name" value="P-loop_NTPase"/>
</dbReference>
<dbReference type="InterPro" id="IPR010603">
    <property type="entry name" value="Znf_CppX_C4"/>
</dbReference>
<dbReference type="InterPro" id="IPR038366">
    <property type="entry name" value="Znf_CppX_C4_sf"/>
</dbReference>
<dbReference type="NCBIfam" id="TIGR00382">
    <property type="entry name" value="clpX"/>
    <property type="match status" value="1"/>
</dbReference>
<dbReference type="NCBIfam" id="NF003745">
    <property type="entry name" value="PRK05342.1"/>
    <property type="match status" value="1"/>
</dbReference>
<dbReference type="PANTHER" id="PTHR48102:SF7">
    <property type="entry name" value="ATP-DEPENDENT CLP PROTEASE ATP-BINDING SUBUNIT CLPX-LIKE, MITOCHONDRIAL"/>
    <property type="match status" value="1"/>
</dbReference>
<dbReference type="PANTHER" id="PTHR48102">
    <property type="entry name" value="ATP-DEPENDENT CLP PROTEASE ATP-BINDING SUBUNIT CLPX-LIKE, MITOCHONDRIAL-RELATED"/>
    <property type="match status" value="1"/>
</dbReference>
<dbReference type="Pfam" id="PF07724">
    <property type="entry name" value="AAA_2"/>
    <property type="match status" value="1"/>
</dbReference>
<dbReference type="Pfam" id="PF10431">
    <property type="entry name" value="ClpB_D2-small"/>
    <property type="match status" value="1"/>
</dbReference>
<dbReference type="Pfam" id="PF06689">
    <property type="entry name" value="zf-C4_ClpX"/>
    <property type="match status" value="1"/>
</dbReference>
<dbReference type="SMART" id="SM00382">
    <property type="entry name" value="AAA"/>
    <property type="match status" value="1"/>
</dbReference>
<dbReference type="SMART" id="SM01086">
    <property type="entry name" value="ClpB_D2-small"/>
    <property type="match status" value="1"/>
</dbReference>
<dbReference type="SMART" id="SM00994">
    <property type="entry name" value="zf-C4_ClpX"/>
    <property type="match status" value="1"/>
</dbReference>
<dbReference type="SUPFAM" id="SSF57716">
    <property type="entry name" value="Glucocorticoid receptor-like (DNA-binding domain)"/>
    <property type="match status" value="1"/>
</dbReference>
<dbReference type="SUPFAM" id="SSF52540">
    <property type="entry name" value="P-loop containing nucleoside triphosphate hydrolases"/>
    <property type="match status" value="1"/>
</dbReference>
<dbReference type="PROSITE" id="PS51902">
    <property type="entry name" value="CLPX_ZB"/>
    <property type="match status" value="1"/>
</dbReference>
<proteinExistence type="inferred from homology"/>
<comment type="function">
    <text evidence="1">ATP-dependent specificity component of the Clp protease. It directs the protease to specific substrates. Can perform chaperone functions in the absence of ClpP.</text>
</comment>
<comment type="subunit">
    <text evidence="1">Component of the ClpX-ClpP complex. Forms a hexameric ring that, in the presence of ATP, binds to fourteen ClpP subunits assembled into a disk-like structure with a central cavity, resembling the structure of eukaryotic proteasomes.</text>
</comment>
<comment type="similarity">
    <text evidence="1">Belongs to the ClpX chaperone family.</text>
</comment>
<organism>
    <name type="scientific">Staphylococcus aureus (strain USA300)</name>
    <dbReference type="NCBI Taxonomy" id="367830"/>
    <lineage>
        <taxon>Bacteria</taxon>
        <taxon>Bacillati</taxon>
        <taxon>Bacillota</taxon>
        <taxon>Bacilli</taxon>
        <taxon>Bacillales</taxon>
        <taxon>Staphylococcaceae</taxon>
        <taxon>Staphylococcus</taxon>
    </lineage>
</organism>
<gene>
    <name evidence="1" type="primary">clpX</name>
    <name type="ordered locus">SAUSA300_1621</name>
</gene>
<reference key="1">
    <citation type="journal article" date="2006" name="Lancet">
        <title>Complete genome sequence of USA300, an epidemic clone of community-acquired meticillin-resistant Staphylococcus aureus.</title>
        <authorList>
            <person name="Diep B.A."/>
            <person name="Gill S.R."/>
            <person name="Chang R.F."/>
            <person name="Phan T.H."/>
            <person name="Chen J.H."/>
            <person name="Davidson M.G."/>
            <person name="Lin F."/>
            <person name="Lin J."/>
            <person name="Carleton H.A."/>
            <person name="Mongodin E.F."/>
            <person name="Sensabaugh G.F."/>
            <person name="Perdreau-Remington F."/>
        </authorList>
    </citation>
    <scope>NUCLEOTIDE SEQUENCE [LARGE SCALE GENOMIC DNA]</scope>
    <source>
        <strain>USA300</strain>
    </source>
</reference>
<name>CLPX_STAA3</name>
<feature type="chain" id="PRO_1000024671" description="ATP-dependent Clp protease ATP-binding subunit ClpX">
    <location>
        <begin position="1"/>
        <end position="420"/>
    </location>
</feature>
<feature type="domain" description="ClpX-type ZB" evidence="2">
    <location>
        <begin position="1"/>
        <end position="54"/>
    </location>
</feature>
<feature type="binding site" evidence="2">
    <location>
        <position position="13"/>
    </location>
    <ligand>
        <name>Zn(2+)</name>
        <dbReference type="ChEBI" id="CHEBI:29105"/>
    </ligand>
</feature>
<feature type="binding site" evidence="2">
    <location>
        <position position="16"/>
    </location>
    <ligand>
        <name>Zn(2+)</name>
        <dbReference type="ChEBI" id="CHEBI:29105"/>
    </ligand>
</feature>
<feature type="binding site" evidence="2">
    <location>
        <position position="35"/>
    </location>
    <ligand>
        <name>Zn(2+)</name>
        <dbReference type="ChEBI" id="CHEBI:29105"/>
    </ligand>
</feature>
<feature type="binding site" evidence="2">
    <location>
        <position position="38"/>
    </location>
    <ligand>
        <name>Zn(2+)</name>
        <dbReference type="ChEBI" id="CHEBI:29105"/>
    </ligand>
</feature>
<feature type="binding site" evidence="1">
    <location>
        <begin position="118"/>
        <end position="125"/>
    </location>
    <ligand>
        <name>ATP</name>
        <dbReference type="ChEBI" id="CHEBI:30616"/>
    </ligand>
</feature>